<keyword id="KW-0414">Isoprene biosynthesis</keyword>
<keyword id="KW-0460">Magnesium</keyword>
<keyword id="KW-0479">Metal-binding</keyword>
<keyword id="KW-0784">Thiamine biosynthesis</keyword>
<keyword id="KW-0786">Thiamine pyrophosphate</keyword>
<keyword id="KW-0808">Transferase</keyword>
<accession>Q02SL1</accession>
<evidence type="ECO:0000255" key="1">
    <source>
        <dbReference type="HAMAP-Rule" id="MF_00315"/>
    </source>
</evidence>
<sequence length="627" mass="68050">MPKTLHEIPRERPATPLLDRASSPAELRRLGEADLETLADELRQYLLYTVGQTGGHFGAGLGVVELTIALHYVFDTPDDRLVWDVGHQAYPHKILTERRELMGTLRQKNGLAAFPRRAESEYDTFGVGHSSTSISAALGMAIAARLQGKERKSVAVIGDGALTAGMAFEALNHASEVDADMLVILNDNDMSISHNVGGLSNYLAKILSSRTYSSMREGSKKVLSRLPGAWEIARRTEEYAKGMLVPGTLFEELGWNYIGPIDGHDLPTLVATLRNMRDMKGPQFLHVVTKKGKGFAPAELDPIGYHAITKLEAPGSAPKKTGGPKYSSVFGQWLCDMAAQDARLLGITPAMKEGSDLVAFSERYPERYFDVAIAEQHAVTLAAGMACEGMKPVVAIYSTFLQRAYDQLIHDVAVQHLDVLFAIDRAGLVGEDGPTHAGSFDISYLRCIPGMLVMTPSDEDELRKLLTTGYLFDGPAAVRYPRGSGPNHPIDPDLQPVEIGKGVVRRRGGRVALLVFGVQLAEAMKVAESLDATVVDMRFVKPLDEALVRELAGSHELLVTIEENAVMGGAGSAVGEFLASEGLEVPLLQLGLPDYYVEHAKPSEMLAECGLDAAGIEKAVRQRLDRQ</sequence>
<protein>
    <recommendedName>
        <fullName evidence="1">1-deoxy-D-xylulose-5-phosphate synthase</fullName>
        <ecNumber evidence="1">2.2.1.7</ecNumber>
    </recommendedName>
    <alternativeName>
        <fullName evidence="1">1-deoxyxylulose-5-phosphate synthase</fullName>
        <shortName evidence="1">DXP synthase</shortName>
        <shortName evidence="1">DXPS</shortName>
    </alternativeName>
</protein>
<name>DXS_PSEAB</name>
<organism>
    <name type="scientific">Pseudomonas aeruginosa (strain UCBPP-PA14)</name>
    <dbReference type="NCBI Taxonomy" id="208963"/>
    <lineage>
        <taxon>Bacteria</taxon>
        <taxon>Pseudomonadati</taxon>
        <taxon>Pseudomonadota</taxon>
        <taxon>Gammaproteobacteria</taxon>
        <taxon>Pseudomonadales</taxon>
        <taxon>Pseudomonadaceae</taxon>
        <taxon>Pseudomonas</taxon>
    </lineage>
</organism>
<reference key="1">
    <citation type="journal article" date="2006" name="Genome Biol.">
        <title>Genomic analysis reveals that Pseudomonas aeruginosa virulence is combinatorial.</title>
        <authorList>
            <person name="Lee D.G."/>
            <person name="Urbach J.M."/>
            <person name="Wu G."/>
            <person name="Liberati N.T."/>
            <person name="Feinbaum R.L."/>
            <person name="Miyata S."/>
            <person name="Diggins L.T."/>
            <person name="He J."/>
            <person name="Saucier M."/>
            <person name="Deziel E."/>
            <person name="Friedman L."/>
            <person name="Li L."/>
            <person name="Grills G."/>
            <person name="Montgomery K."/>
            <person name="Kucherlapati R."/>
            <person name="Rahme L.G."/>
            <person name="Ausubel F.M."/>
        </authorList>
    </citation>
    <scope>NUCLEOTIDE SEQUENCE [LARGE SCALE GENOMIC DNA]</scope>
    <source>
        <strain>UCBPP-PA14</strain>
    </source>
</reference>
<feature type="chain" id="PRO_1000019062" description="1-deoxy-D-xylulose-5-phosphate synthase">
    <location>
        <begin position="1"/>
        <end position="627"/>
    </location>
</feature>
<feature type="binding site" evidence="1">
    <location>
        <position position="87"/>
    </location>
    <ligand>
        <name>thiamine diphosphate</name>
        <dbReference type="ChEBI" id="CHEBI:58937"/>
    </ligand>
</feature>
<feature type="binding site" evidence="1">
    <location>
        <begin position="128"/>
        <end position="130"/>
    </location>
    <ligand>
        <name>thiamine diphosphate</name>
        <dbReference type="ChEBI" id="CHEBI:58937"/>
    </ligand>
</feature>
<feature type="binding site" evidence="1">
    <location>
        <position position="159"/>
    </location>
    <ligand>
        <name>Mg(2+)</name>
        <dbReference type="ChEBI" id="CHEBI:18420"/>
    </ligand>
</feature>
<feature type="binding site" evidence="1">
    <location>
        <begin position="160"/>
        <end position="161"/>
    </location>
    <ligand>
        <name>thiamine diphosphate</name>
        <dbReference type="ChEBI" id="CHEBI:58937"/>
    </ligand>
</feature>
<feature type="binding site" evidence="1">
    <location>
        <position position="188"/>
    </location>
    <ligand>
        <name>Mg(2+)</name>
        <dbReference type="ChEBI" id="CHEBI:18420"/>
    </ligand>
</feature>
<feature type="binding site" evidence="1">
    <location>
        <position position="188"/>
    </location>
    <ligand>
        <name>thiamine diphosphate</name>
        <dbReference type="ChEBI" id="CHEBI:58937"/>
    </ligand>
</feature>
<feature type="binding site" evidence="1">
    <location>
        <position position="295"/>
    </location>
    <ligand>
        <name>thiamine diphosphate</name>
        <dbReference type="ChEBI" id="CHEBI:58937"/>
    </ligand>
</feature>
<feature type="binding site" evidence="1">
    <location>
        <position position="375"/>
    </location>
    <ligand>
        <name>thiamine diphosphate</name>
        <dbReference type="ChEBI" id="CHEBI:58937"/>
    </ligand>
</feature>
<gene>
    <name evidence="1" type="primary">dxs</name>
    <name type="ordered locus">PA14_11550</name>
</gene>
<proteinExistence type="inferred from homology"/>
<comment type="function">
    <text evidence="1">Catalyzes the acyloin condensation reaction between C atoms 2 and 3 of pyruvate and glyceraldehyde 3-phosphate to yield 1-deoxy-D-xylulose-5-phosphate (DXP).</text>
</comment>
<comment type="catalytic activity">
    <reaction evidence="1">
        <text>D-glyceraldehyde 3-phosphate + pyruvate + H(+) = 1-deoxy-D-xylulose 5-phosphate + CO2</text>
        <dbReference type="Rhea" id="RHEA:12605"/>
        <dbReference type="ChEBI" id="CHEBI:15361"/>
        <dbReference type="ChEBI" id="CHEBI:15378"/>
        <dbReference type="ChEBI" id="CHEBI:16526"/>
        <dbReference type="ChEBI" id="CHEBI:57792"/>
        <dbReference type="ChEBI" id="CHEBI:59776"/>
        <dbReference type="EC" id="2.2.1.7"/>
    </reaction>
</comment>
<comment type="cofactor">
    <cofactor evidence="1">
        <name>Mg(2+)</name>
        <dbReference type="ChEBI" id="CHEBI:18420"/>
    </cofactor>
    <text evidence="1">Binds 1 Mg(2+) ion per subunit.</text>
</comment>
<comment type="cofactor">
    <cofactor evidence="1">
        <name>thiamine diphosphate</name>
        <dbReference type="ChEBI" id="CHEBI:58937"/>
    </cofactor>
    <text evidence="1">Binds 1 thiamine pyrophosphate per subunit.</text>
</comment>
<comment type="pathway">
    <text evidence="1">Metabolic intermediate biosynthesis; 1-deoxy-D-xylulose 5-phosphate biosynthesis; 1-deoxy-D-xylulose 5-phosphate from D-glyceraldehyde 3-phosphate and pyruvate: step 1/1.</text>
</comment>
<comment type="subunit">
    <text evidence="1">Homodimer.</text>
</comment>
<comment type="similarity">
    <text evidence="1">Belongs to the transketolase family. DXPS subfamily.</text>
</comment>
<dbReference type="EC" id="2.2.1.7" evidence="1"/>
<dbReference type="EMBL" id="CP000438">
    <property type="protein sequence ID" value="ABJ13317.1"/>
    <property type="molecule type" value="Genomic_DNA"/>
</dbReference>
<dbReference type="RefSeq" id="WP_003102816.1">
    <property type="nucleotide sequence ID" value="NZ_CP034244.1"/>
</dbReference>
<dbReference type="SMR" id="Q02SL1"/>
<dbReference type="KEGG" id="pau:PA14_11550"/>
<dbReference type="PseudoCAP" id="PA14_11550"/>
<dbReference type="HOGENOM" id="CLU_009227_1_4_6"/>
<dbReference type="BioCyc" id="PAER208963:G1G74-960-MONOMER"/>
<dbReference type="UniPathway" id="UPA00064">
    <property type="reaction ID" value="UER00091"/>
</dbReference>
<dbReference type="Proteomes" id="UP000000653">
    <property type="component" value="Chromosome"/>
</dbReference>
<dbReference type="GO" id="GO:0005829">
    <property type="term" value="C:cytosol"/>
    <property type="evidence" value="ECO:0007669"/>
    <property type="project" value="TreeGrafter"/>
</dbReference>
<dbReference type="GO" id="GO:0008661">
    <property type="term" value="F:1-deoxy-D-xylulose-5-phosphate synthase activity"/>
    <property type="evidence" value="ECO:0007669"/>
    <property type="project" value="UniProtKB-UniRule"/>
</dbReference>
<dbReference type="GO" id="GO:0000287">
    <property type="term" value="F:magnesium ion binding"/>
    <property type="evidence" value="ECO:0007669"/>
    <property type="project" value="UniProtKB-UniRule"/>
</dbReference>
<dbReference type="GO" id="GO:0030976">
    <property type="term" value="F:thiamine pyrophosphate binding"/>
    <property type="evidence" value="ECO:0007669"/>
    <property type="project" value="UniProtKB-UniRule"/>
</dbReference>
<dbReference type="GO" id="GO:0052865">
    <property type="term" value="P:1-deoxy-D-xylulose 5-phosphate biosynthetic process"/>
    <property type="evidence" value="ECO:0007669"/>
    <property type="project" value="UniProtKB-UniPathway"/>
</dbReference>
<dbReference type="GO" id="GO:0019288">
    <property type="term" value="P:isopentenyl diphosphate biosynthetic process, methylerythritol 4-phosphate pathway"/>
    <property type="evidence" value="ECO:0007669"/>
    <property type="project" value="TreeGrafter"/>
</dbReference>
<dbReference type="GO" id="GO:0016114">
    <property type="term" value="P:terpenoid biosynthetic process"/>
    <property type="evidence" value="ECO:0007669"/>
    <property type="project" value="UniProtKB-UniRule"/>
</dbReference>
<dbReference type="GO" id="GO:0009228">
    <property type="term" value="P:thiamine biosynthetic process"/>
    <property type="evidence" value="ECO:0007669"/>
    <property type="project" value="UniProtKB-UniRule"/>
</dbReference>
<dbReference type="CDD" id="cd02007">
    <property type="entry name" value="TPP_DXS"/>
    <property type="match status" value="1"/>
</dbReference>
<dbReference type="CDD" id="cd07033">
    <property type="entry name" value="TPP_PYR_DXS_TK_like"/>
    <property type="match status" value="1"/>
</dbReference>
<dbReference type="FunFam" id="3.40.50.920:FF:000002">
    <property type="entry name" value="1-deoxy-D-xylulose-5-phosphate synthase"/>
    <property type="match status" value="1"/>
</dbReference>
<dbReference type="FunFam" id="3.40.50.970:FF:000005">
    <property type="entry name" value="1-deoxy-D-xylulose-5-phosphate synthase"/>
    <property type="match status" value="1"/>
</dbReference>
<dbReference type="Gene3D" id="3.40.50.920">
    <property type="match status" value="1"/>
</dbReference>
<dbReference type="Gene3D" id="3.40.50.970">
    <property type="match status" value="2"/>
</dbReference>
<dbReference type="HAMAP" id="MF_00315">
    <property type="entry name" value="DXP_synth"/>
    <property type="match status" value="1"/>
</dbReference>
<dbReference type="InterPro" id="IPR005477">
    <property type="entry name" value="Dxylulose-5-P_synthase"/>
</dbReference>
<dbReference type="InterPro" id="IPR029061">
    <property type="entry name" value="THDP-binding"/>
</dbReference>
<dbReference type="InterPro" id="IPR009014">
    <property type="entry name" value="Transketo_C/PFOR_II"/>
</dbReference>
<dbReference type="InterPro" id="IPR005475">
    <property type="entry name" value="Transketolase-like_Pyr-bd"/>
</dbReference>
<dbReference type="InterPro" id="IPR020826">
    <property type="entry name" value="Transketolase_BS"/>
</dbReference>
<dbReference type="InterPro" id="IPR033248">
    <property type="entry name" value="Transketolase_C"/>
</dbReference>
<dbReference type="NCBIfam" id="TIGR00204">
    <property type="entry name" value="dxs"/>
    <property type="match status" value="1"/>
</dbReference>
<dbReference type="NCBIfam" id="NF003933">
    <property type="entry name" value="PRK05444.2-2"/>
    <property type="match status" value="1"/>
</dbReference>
<dbReference type="PANTHER" id="PTHR43322">
    <property type="entry name" value="1-D-DEOXYXYLULOSE 5-PHOSPHATE SYNTHASE-RELATED"/>
    <property type="match status" value="1"/>
</dbReference>
<dbReference type="PANTHER" id="PTHR43322:SF5">
    <property type="entry name" value="1-DEOXY-D-XYLULOSE-5-PHOSPHATE SYNTHASE, CHLOROPLASTIC"/>
    <property type="match status" value="1"/>
</dbReference>
<dbReference type="Pfam" id="PF13292">
    <property type="entry name" value="DXP_synthase_N"/>
    <property type="match status" value="1"/>
</dbReference>
<dbReference type="Pfam" id="PF02779">
    <property type="entry name" value="Transket_pyr"/>
    <property type="match status" value="1"/>
</dbReference>
<dbReference type="Pfam" id="PF02780">
    <property type="entry name" value="Transketolase_C"/>
    <property type="match status" value="1"/>
</dbReference>
<dbReference type="SMART" id="SM00861">
    <property type="entry name" value="Transket_pyr"/>
    <property type="match status" value="1"/>
</dbReference>
<dbReference type="SUPFAM" id="SSF52518">
    <property type="entry name" value="Thiamin diphosphate-binding fold (THDP-binding)"/>
    <property type="match status" value="2"/>
</dbReference>
<dbReference type="SUPFAM" id="SSF52922">
    <property type="entry name" value="TK C-terminal domain-like"/>
    <property type="match status" value="1"/>
</dbReference>
<dbReference type="PROSITE" id="PS00802">
    <property type="entry name" value="TRANSKETOLASE_2"/>
    <property type="match status" value="1"/>
</dbReference>